<protein>
    <recommendedName>
        <fullName evidence="8">Cation-transporting ATPase catp-5</fullName>
        <ecNumber>7.2.2.-</ecNumber>
    </recommendedName>
</protein>
<comment type="function">
    <text evidence="4">Involved in the uptake and/or transport of polyamines, probably through ATP hydrolysis. This contributes to the maintenance of intracellular polyamine levels. Polyamines are essential for cell proliferation and are implicated in cellular processes, ranging from DNA replication to apoptosis.</text>
</comment>
<comment type="catalytic activity">
    <reaction>
        <text>ATP + H2O = ADP + phosphate + H(+)</text>
        <dbReference type="Rhea" id="RHEA:13065"/>
        <dbReference type="ChEBI" id="CHEBI:15377"/>
        <dbReference type="ChEBI" id="CHEBI:15378"/>
        <dbReference type="ChEBI" id="CHEBI:30616"/>
        <dbReference type="ChEBI" id="CHEBI:43474"/>
        <dbReference type="ChEBI" id="CHEBI:456216"/>
    </reaction>
</comment>
<comment type="subcellular location">
    <subcellularLocation>
        <location evidence="4">Apical cell membrane</location>
        <topology>Multi-pass membrane protein</topology>
    </subcellularLocation>
</comment>
<comment type="alternative products">
    <event type="alternative splicing"/>
    <isoform>
        <id>Q21286-1</id>
        <name evidence="8">b</name>
        <sequence type="displayed"/>
    </isoform>
    <isoform>
        <id>Q21286-2</id>
        <name evidence="7">a</name>
        <sequence type="described" ref="VSP_012458"/>
    </isoform>
</comment>
<comment type="tissue specificity">
    <text evidence="4">Expressed in the 20 intestinal cells and in the excretory cell.</text>
</comment>
<comment type="developmental stage">
    <text evidence="4">Not expressed in embryos, but expressed at all larval stages of development and in adults.</text>
</comment>
<comment type="disruption phenotype">
    <text evidence="4">Disrupts the polyamine uptake and/or transport of the polyamine conjugate Ant-4,4 and norspermidine, a toxic structural analog of the polyamine spermidine. Intracellular levels of the natural polyamines spermidine and putrescine are as wild-type. Double knockout with either odc-1 or smd-1 (two enzymes involved in polyamine synthesis) results in a reduced brood size, delayed postembryonic development and reduced intracellular levels of spermidine. Double knockout with odc-1 results in reduced levels of the polyamine putrescine, while double knockout with smd-1 results in increased accumulation of putrescine.</text>
</comment>
<comment type="similarity">
    <text evidence="6">Belongs to the cation transport ATPase (P-type) (TC 3.A.3) family. Type V subfamily.</text>
</comment>
<gene>
    <name evidence="5 8" type="primary">catp-5</name>
    <name evidence="8" type="ORF">K07E3.7</name>
</gene>
<organism>
    <name type="scientific">Caenorhabditis elegans</name>
    <dbReference type="NCBI Taxonomy" id="6239"/>
    <lineage>
        <taxon>Eukaryota</taxon>
        <taxon>Metazoa</taxon>
        <taxon>Ecdysozoa</taxon>
        <taxon>Nematoda</taxon>
        <taxon>Chromadorea</taxon>
        <taxon>Rhabditida</taxon>
        <taxon>Rhabditina</taxon>
        <taxon>Rhabditomorpha</taxon>
        <taxon>Rhabditoidea</taxon>
        <taxon>Rhabditidae</taxon>
        <taxon>Peloderinae</taxon>
        <taxon>Caenorhabditis</taxon>
    </lineage>
</organism>
<accession>Q21286</accession>
<accession>Q10461</accession>
<accession>Q65ZI7</accession>
<accession>Q65ZI8</accession>
<keyword id="KW-0025">Alternative splicing</keyword>
<keyword id="KW-0067">ATP-binding</keyword>
<keyword id="KW-1003">Cell membrane</keyword>
<keyword id="KW-0460">Magnesium</keyword>
<keyword id="KW-0472">Membrane</keyword>
<keyword id="KW-0479">Metal-binding</keyword>
<keyword id="KW-0547">Nucleotide-binding</keyword>
<keyword id="KW-0597">Phosphoprotein</keyword>
<keyword id="KW-1185">Reference proteome</keyword>
<keyword id="KW-1278">Translocase</keyword>
<keyword id="KW-0812">Transmembrane</keyword>
<keyword id="KW-1133">Transmembrane helix</keyword>
<feature type="chain" id="PRO_0000046356" description="Cation-transporting ATPase catp-5" evidence="6">
    <location>
        <begin position="1"/>
        <end position="1203"/>
    </location>
</feature>
<feature type="topological domain" description="Cytoplasmic" evidence="2">
    <location>
        <begin position="1"/>
        <end position="68"/>
    </location>
</feature>
<feature type="transmembrane region" description="Helical" evidence="2">
    <location>
        <begin position="69"/>
        <end position="89"/>
    </location>
</feature>
<feature type="topological domain" description="Extracellular" evidence="2">
    <location>
        <begin position="90"/>
        <end position="209"/>
    </location>
</feature>
<feature type="transmembrane region" description="Helical" evidence="2">
    <location>
        <begin position="210"/>
        <end position="230"/>
    </location>
</feature>
<feature type="topological domain" description="Cytoplasmic" evidence="2">
    <location>
        <begin position="231"/>
        <end position="242"/>
    </location>
</feature>
<feature type="transmembrane region" description="Helical" evidence="2">
    <location>
        <begin position="243"/>
        <end position="263"/>
    </location>
</feature>
<feature type="topological domain" description="Extracellular" evidence="2">
    <location>
        <begin position="264"/>
        <end position="297"/>
    </location>
</feature>
<feature type="transmembrane region" description="Helical" evidence="2">
    <location>
        <begin position="298"/>
        <end position="318"/>
    </location>
</feature>
<feature type="topological domain" description="Cytoplasmic" evidence="2">
    <location>
        <begin position="319"/>
        <end position="414"/>
    </location>
</feature>
<feature type="transmembrane region" description="Helical" evidence="2">
    <location>
        <begin position="415"/>
        <end position="435"/>
    </location>
</feature>
<feature type="topological domain" description="Extracellular" evidence="2">
    <location>
        <begin position="436"/>
        <end position="451"/>
    </location>
</feature>
<feature type="transmembrane region" description="Helical" evidence="2">
    <location>
        <begin position="452"/>
        <end position="472"/>
    </location>
</feature>
<feature type="topological domain" description="Cytoplasmic" evidence="2">
    <location>
        <begin position="473"/>
        <end position="935"/>
    </location>
</feature>
<feature type="transmembrane region" description="Helical" evidence="2">
    <location>
        <begin position="936"/>
        <end position="956"/>
    </location>
</feature>
<feature type="topological domain" description="Extracellular" evidence="2">
    <location>
        <begin position="957"/>
        <end position="962"/>
    </location>
</feature>
<feature type="transmembrane region" description="Helical" evidence="2">
    <location>
        <begin position="963"/>
        <end position="983"/>
    </location>
</feature>
<feature type="topological domain" description="Cytoplasmic" evidence="2">
    <location>
        <begin position="984"/>
        <end position="1007"/>
    </location>
</feature>
<feature type="transmembrane region" description="Helical" evidence="2">
    <location>
        <begin position="1008"/>
        <end position="1028"/>
    </location>
</feature>
<feature type="topological domain" description="Extracellular" evidence="2">
    <location>
        <begin position="1029"/>
        <end position="1046"/>
    </location>
</feature>
<feature type="transmembrane region" description="Helical" evidence="2">
    <location>
        <begin position="1047"/>
        <end position="1067"/>
    </location>
</feature>
<feature type="topological domain" description="Cytoplasmic" evidence="2">
    <location>
        <begin position="1068"/>
        <end position="1085"/>
    </location>
</feature>
<feature type="transmembrane region" description="Helical" evidence="2">
    <location>
        <begin position="1086"/>
        <end position="1106"/>
    </location>
</feature>
<feature type="topological domain" description="Extracellular" evidence="2">
    <location>
        <begin position="1107"/>
        <end position="1120"/>
    </location>
</feature>
<feature type="transmembrane region" description="Helical" evidence="2">
    <location>
        <begin position="1121"/>
        <end position="1141"/>
    </location>
</feature>
<feature type="topological domain" description="Cytoplasmic" evidence="2">
    <location>
        <begin position="1142"/>
        <end position="1203"/>
    </location>
</feature>
<feature type="region of interest" description="Disordered" evidence="3">
    <location>
        <begin position="21"/>
        <end position="42"/>
    </location>
</feature>
<feature type="region of interest" description="Disordered" evidence="3">
    <location>
        <begin position="595"/>
        <end position="617"/>
    </location>
</feature>
<feature type="active site" description="4-aspartylphosphate intermediate" evidence="1">
    <location>
        <position position="503"/>
    </location>
</feature>
<feature type="binding site" evidence="1">
    <location>
        <position position="883"/>
    </location>
    <ligand>
        <name>Mg(2+)</name>
        <dbReference type="ChEBI" id="CHEBI:18420"/>
    </ligand>
</feature>
<feature type="binding site" evidence="1">
    <location>
        <position position="887"/>
    </location>
    <ligand>
        <name>Mg(2+)</name>
        <dbReference type="ChEBI" id="CHEBI:18420"/>
    </ligand>
</feature>
<feature type="splice variant" id="VSP_012458" description="In isoform a." evidence="6">
    <location>
        <begin position="1"/>
        <end position="29"/>
    </location>
</feature>
<reference key="1">
    <citation type="journal article" date="1998" name="Science">
        <title>Genome sequence of the nematode C. elegans: a platform for investigating biology.</title>
        <authorList>
            <consortium name="The C. elegans sequencing consortium"/>
        </authorList>
    </citation>
    <scope>NUCLEOTIDE SEQUENCE [LARGE SCALE GENOMIC DNA]</scope>
    <source>
        <strain>Bristol N2</strain>
    </source>
</reference>
<reference key="2">
    <citation type="journal article" date="2010" name="FASEB J.">
        <title>Caenorhabditis elegans P5B-type ATPase CATP-5 operates in polyamine transport and is crucial for norspermidine-mediated suppression of RNA interference.</title>
        <authorList>
            <person name="Heinick A."/>
            <person name="Urban K."/>
            <person name="Roth S."/>
            <person name="Spies D."/>
            <person name="Nunes F."/>
            <person name="Phanstiel O. IV"/>
            <person name="Liebau E."/>
            <person name="Lueersen K."/>
        </authorList>
    </citation>
    <scope>FUNCTION</scope>
    <scope>SUBCELLULAR LOCATION</scope>
    <scope>TISSUE SPECIFICITY</scope>
    <scope>DEVELOPMENTAL STAGE</scope>
    <scope>DISRUPTION PHENOTYPE</scope>
</reference>
<name>CATP5_CAEEL</name>
<evidence type="ECO:0000250" key="1"/>
<evidence type="ECO:0000255" key="2"/>
<evidence type="ECO:0000256" key="3">
    <source>
        <dbReference type="SAM" id="MobiDB-lite"/>
    </source>
</evidence>
<evidence type="ECO:0000269" key="4">
    <source>
    </source>
</evidence>
<evidence type="ECO:0000303" key="5">
    <source>
    </source>
</evidence>
<evidence type="ECO:0000305" key="6"/>
<evidence type="ECO:0000312" key="7">
    <source>
        <dbReference type="WormBase" id="K07E3.7a"/>
    </source>
</evidence>
<evidence type="ECO:0000312" key="8">
    <source>
        <dbReference type="WormBase" id="K07E3.7b"/>
    </source>
</evidence>
<proteinExistence type="evidence at transcript level"/>
<sequence>MNTSEREPLLDTTTRNRVYDTTDNPSTKIMKREKDNPKAKTTSFNQGKLNIGEETCDLYAYKETIGRQILFWLLTIVTLGFYQLLAYWVKSLFVKVRFQPTSHDECEYVMVEDIHGTQTIKEVFKAESDVGLARPTRSGKQEKVKVMRFFTYRKIKYIWYEKDQEWLNPADMDSAAPFNIYQKLTLDVIGLKEQDVIASRKIYNMNALALALTPILVILFKEVLGPFYLFQCFSVALWYSDNYAYYASVIVIITVGSAAVAVYQMRAQEKRIRNMVGDTISVIVRRDGHDITIDASEIVPMDILILPSNTFILPCDCLLMNGTVIVNEAMLTGESVPVTKASLKEADECGPEIRLSSEHNRHTLFSGTTVLQTRNYKGQPVMARVIRTGFSTLKGQLVRSIMYPKPQEKEALKDVMVFILVLGFIALIGFIYTVIEMVSRGESLKHIIIRSLDIITIVVPPALPAAMSVGIINANSRLKKKKIFCTSPTTVNVCGLINVACFDKTGTLTEDGLDFNCLKAIRKNEDGKPEFTSEFEELDPVKLSAENANLNIVVAAASCHSLTRIDGTLHGDPLELILVEKSKWIIEEAVNSDEETQDFDTVQPTVLRPPPEQATYHPENNEYSVIKQHPFNSALQRMSVIISTPSEHSAHDMMVFTKGSPEMIASLCIPDTIPEDYMEVVDEYAQRGFRLIAVASKAVHLNFAKALKTPRDIMESELEFLGLIVMENRLKDVTLSVINELSVANIRCVMVTGDNLLTAMSVARECGIIRPTKKAFLITHSKTEKDPLGRTKLFIKESVSSSENDIDTDSEVRAFDRKAVLRTATYQMAIAGPTYSVITHEYPELVDRITAMCDVYARMAPDQKAQLIGALQEIGAKVSMCGDGANDCAALKAAHAGISLSQAEASIAAPFTSNVPDIRCVPTVIKEGRCALVTSYAVSKYMAAYSLNEFLSVMLLYNDGTNISDGQFLYIDLVLITLVALFLGNTEASRKLSGIPPPRRLATSAFYFSVFGQMFFNIITQTTGYLLVRGQSWYVPNPEELDNTTTMIGTTVFFTSCCMYLGYAFVYSKGHPYRRSVFTNWLLCGIIFVIGAINMVMIFTNMGFLMNLMGFVYVPSTSMRFILLAISLAGVFLSLLYEHFFVEKVVAIHFESYLRQRRLRNGDPSLSAYEKILAAIGSSPRWFEDEINLSKSIDRKETIESKC</sequence>
<dbReference type="EC" id="7.2.2.-"/>
<dbReference type="EMBL" id="FO080274">
    <property type="protein sequence ID" value="CCD62517.1"/>
    <property type="molecule type" value="Genomic_DNA"/>
</dbReference>
<dbReference type="EMBL" id="FO080274">
    <property type="protein sequence ID" value="CCD62518.1"/>
    <property type="molecule type" value="Genomic_DNA"/>
</dbReference>
<dbReference type="PIR" id="A89583">
    <property type="entry name" value="A89583"/>
</dbReference>
<dbReference type="RefSeq" id="NP_001024767.1">
    <property type="nucleotide sequence ID" value="NM_001029596.2"/>
</dbReference>
<dbReference type="RefSeq" id="NP_001024768.1">
    <property type="nucleotide sequence ID" value="NM_001029597.1"/>
</dbReference>
<dbReference type="RefSeq" id="NP_001379600.1">
    <molecule id="Q21286-2"/>
    <property type="nucleotide sequence ID" value="NM_001392807.1"/>
</dbReference>
<dbReference type="SMR" id="Q21286"/>
<dbReference type="FunCoup" id="Q21286">
    <property type="interactions" value="675"/>
</dbReference>
<dbReference type="STRING" id="6239.K07E3.7b.1"/>
<dbReference type="iPTMnet" id="Q21286"/>
<dbReference type="PaxDb" id="6239-K07E3.7b"/>
<dbReference type="PeptideAtlas" id="Q21286"/>
<dbReference type="EnsemblMetazoa" id="K07E3.7a.1">
    <molecule id="Q21286-2"/>
    <property type="protein sequence ID" value="K07E3.7a.1"/>
    <property type="gene ID" value="WBGene00019493"/>
</dbReference>
<dbReference type="EnsemblMetazoa" id="K07E3.7a.2">
    <molecule id="Q21286-2"/>
    <property type="protein sequence ID" value="K07E3.7a.2"/>
    <property type="gene ID" value="WBGene00019493"/>
</dbReference>
<dbReference type="EnsemblMetazoa" id="K07E3.7a.3">
    <molecule id="Q21286-2"/>
    <property type="protein sequence ID" value="K07E3.7a.3"/>
    <property type="gene ID" value="WBGene00019493"/>
</dbReference>
<dbReference type="EnsemblMetazoa" id="K07E3.7a.4">
    <molecule id="Q21286-2"/>
    <property type="protein sequence ID" value="K07E3.7a.4"/>
    <property type="gene ID" value="WBGene00019493"/>
</dbReference>
<dbReference type="AGR" id="WB:WBGene00019493"/>
<dbReference type="WormBase" id="K07E3.7a">
    <molecule id="Q21286-2"/>
    <property type="protein sequence ID" value="CE37253"/>
    <property type="gene ID" value="WBGene00019493"/>
    <property type="gene designation" value="catp-5"/>
</dbReference>
<dbReference type="WormBase" id="K07E3.7b">
    <molecule id="Q21286-1"/>
    <property type="protein sequence ID" value="CE37254"/>
    <property type="gene ID" value="WBGene00019493"/>
    <property type="gene designation" value="catp-5"/>
</dbReference>
<dbReference type="eggNOG" id="KOG0208">
    <property type="taxonomic scope" value="Eukaryota"/>
</dbReference>
<dbReference type="InParanoid" id="Q21286"/>
<dbReference type="OMA" id="FSCFQYM"/>
<dbReference type="PhylomeDB" id="Q21286"/>
<dbReference type="Reactome" id="R-CEL-936837">
    <property type="pathway name" value="Ion transport by P-type ATPases"/>
</dbReference>
<dbReference type="PRO" id="PR:Q21286"/>
<dbReference type="Proteomes" id="UP000001940">
    <property type="component" value="Chromosome X"/>
</dbReference>
<dbReference type="Bgee" id="WBGene00019493">
    <property type="expression patterns" value="Expressed in larva and 3 other cell types or tissues"/>
</dbReference>
<dbReference type="ExpressionAtlas" id="Q21286">
    <property type="expression patterns" value="baseline and differential"/>
</dbReference>
<dbReference type="GO" id="GO:0016324">
    <property type="term" value="C:apical plasma membrane"/>
    <property type="evidence" value="ECO:0000314"/>
    <property type="project" value="WormBase"/>
</dbReference>
<dbReference type="GO" id="GO:0016020">
    <property type="term" value="C:membrane"/>
    <property type="evidence" value="ECO:0000318"/>
    <property type="project" value="GO_Central"/>
</dbReference>
<dbReference type="GO" id="GO:0005524">
    <property type="term" value="F:ATP binding"/>
    <property type="evidence" value="ECO:0007669"/>
    <property type="project" value="UniProtKB-KW"/>
</dbReference>
<dbReference type="GO" id="GO:0016887">
    <property type="term" value="F:ATP hydrolysis activity"/>
    <property type="evidence" value="ECO:0007669"/>
    <property type="project" value="InterPro"/>
</dbReference>
<dbReference type="GO" id="GO:0019829">
    <property type="term" value="F:ATPase-coupled monoatomic cation transmembrane transporter activity"/>
    <property type="evidence" value="ECO:0000318"/>
    <property type="project" value="GO_Central"/>
</dbReference>
<dbReference type="GO" id="GO:0046872">
    <property type="term" value="F:metal ion binding"/>
    <property type="evidence" value="ECO:0007669"/>
    <property type="project" value="UniProtKB-KW"/>
</dbReference>
<dbReference type="GO" id="GO:0015662">
    <property type="term" value="F:P-type ion transporter activity"/>
    <property type="evidence" value="ECO:0007669"/>
    <property type="project" value="InterPro"/>
</dbReference>
<dbReference type="GO" id="GO:0015203">
    <property type="term" value="F:polyamine transmembrane transporter activity"/>
    <property type="evidence" value="ECO:0000315"/>
    <property type="project" value="WormBase"/>
</dbReference>
<dbReference type="GO" id="GO:0006874">
    <property type="term" value="P:intracellular calcium ion homeostasis"/>
    <property type="evidence" value="ECO:0000318"/>
    <property type="project" value="GO_Central"/>
</dbReference>
<dbReference type="GO" id="GO:1902047">
    <property type="term" value="P:polyamine transmembrane transport"/>
    <property type="evidence" value="ECO:0000315"/>
    <property type="project" value="WormBase"/>
</dbReference>
<dbReference type="CDD" id="cd07542">
    <property type="entry name" value="P-type_ATPase_cation"/>
    <property type="match status" value="1"/>
</dbReference>
<dbReference type="FunFam" id="3.40.1110.10:FF:000130">
    <property type="entry name" value="Cation-transporting ATPase"/>
    <property type="match status" value="1"/>
</dbReference>
<dbReference type="FunFam" id="3.40.50.1000:FF:000068">
    <property type="entry name" value="Cation-transporting ATPase"/>
    <property type="match status" value="1"/>
</dbReference>
<dbReference type="Gene3D" id="3.40.1110.10">
    <property type="entry name" value="Calcium-transporting ATPase, cytoplasmic domain N"/>
    <property type="match status" value="1"/>
</dbReference>
<dbReference type="Gene3D" id="2.70.150.10">
    <property type="entry name" value="Calcium-transporting ATPase, cytoplasmic transduction domain A"/>
    <property type="match status" value="1"/>
</dbReference>
<dbReference type="Gene3D" id="3.40.50.1000">
    <property type="entry name" value="HAD superfamily/HAD-like"/>
    <property type="match status" value="1"/>
</dbReference>
<dbReference type="InterPro" id="IPR023299">
    <property type="entry name" value="ATPase_P-typ_cyto_dom_N"/>
</dbReference>
<dbReference type="InterPro" id="IPR018303">
    <property type="entry name" value="ATPase_P-typ_P_site"/>
</dbReference>
<dbReference type="InterPro" id="IPR023298">
    <property type="entry name" value="ATPase_P-typ_TM_dom_sf"/>
</dbReference>
<dbReference type="InterPro" id="IPR008250">
    <property type="entry name" value="ATPase_P-typ_transduc_dom_A_sf"/>
</dbReference>
<dbReference type="InterPro" id="IPR036412">
    <property type="entry name" value="HAD-like_sf"/>
</dbReference>
<dbReference type="InterPro" id="IPR023214">
    <property type="entry name" value="HAD_sf"/>
</dbReference>
<dbReference type="InterPro" id="IPR006544">
    <property type="entry name" value="P-type_TPase_V"/>
</dbReference>
<dbReference type="InterPro" id="IPR047819">
    <property type="entry name" value="P5A-ATPase_N"/>
</dbReference>
<dbReference type="InterPro" id="IPR047821">
    <property type="entry name" value="P5B-type_ATPase"/>
</dbReference>
<dbReference type="InterPro" id="IPR001757">
    <property type="entry name" value="P_typ_ATPase"/>
</dbReference>
<dbReference type="InterPro" id="IPR044492">
    <property type="entry name" value="P_typ_ATPase_HD_dom"/>
</dbReference>
<dbReference type="NCBIfam" id="TIGR01494">
    <property type="entry name" value="ATPase_P-type"/>
    <property type="match status" value="3"/>
</dbReference>
<dbReference type="NCBIfam" id="TIGR01657">
    <property type="entry name" value="P-ATPase-V"/>
    <property type="match status" value="1"/>
</dbReference>
<dbReference type="PANTHER" id="PTHR45630:SF9">
    <property type="entry name" value="CATION-TRANSPORTING ATPASE CATP-5"/>
    <property type="match status" value="1"/>
</dbReference>
<dbReference type="PANTHER" id="PTHR45630">
    <property type="entry name" value="CATION-TRANSPORTING ATPASE-RELATED"/>
    <property type="match status" value="1"/>
</dbReference>
<dbReference type="Pfam" id="PF13246">
    <property type="entry name" value="Cation_ATPase"/>
    <property type="match status" value="1"/>
</dbReference>
<dbReference type="Pfam" id="PF00122">
    <property type="entry name" value="E1-E2_ATPase"/>
    <property type="match status" value="1"/>
</dbReference>
<dbReference type="Pfam" id="PF12409">
    <property type="entry name" value="P5-ATPase"/>
    <property type="match status" value="1"/>
</dbReference>
<dbReference type="PRINTS" id="PR00119">
    <property type="entry name" value="CATATPASE"/>
</dbReference>
<dbReference type="SFLD" id="SFLDG00002">
    <property type="entry name" value="C1.7:_P-type_atpase_like"/>
    <property type="match status" value="1"/>
</dbReference>
<dbReference type="SFLD" id="SFLDF00027">
    <property type="entry name" value="p-type_atpase"/>
    <property type="match status" value="1"/>
</dbReference>
<dbReference type="SUPFAM" id="SSF81653">
    <property type="entry name" value="Calcium ATPase, transduction domain A"/>
    <property type="match status" value="1"/>
</dbReference>
<dbReference type="SUPFAM" id="SSF81665">
    <property type="entry name" value="Calcium ATPase, transmembrane domain M"/>
    <property type="match status" value="1"/>
</dbReference>
<dbReference type="SUPFAM" id="SSF56784">
    <property type="entry name" value="HAD-like"/>
    <property type="match status" value="1"/>
</dbReference>
<dbReference type="SUPFAM" id="SSF81660">
    <property type="entry name" value="Metal cation-transporting ATPase, ATP-binding domain N"/>
    <property type="match status" value="1"/>
</dbReference>
<dbReference type="PROSITE" id="PS00154">
    <property type="entry name" value="ATPASE_E1_E2"/>
    <property type="match status" value="1"/>
</dbReference>